<name>TRPD_PROMA</name>
<protein>
    <recommendedName>
        <fullName evidence="1">Anthranilate phosphoribosyltransferase</fullName>
        <ecNumber evidence="1">2.4.2.18</ecNumber>
    </recommendedName>
</protein>
<dbReference type="EC" id="2.4.2.18" evidence="1"/>
<dbReference type="EMBL" id="AE017126">
    <property type="protein sequence ID" value="AAP99788.1"/>
    <property type="molecule type" value="Genomic_DNA"/>
</dbReference>
<dbReference type="RefSeq" id="NP_875136.1">
    <property type="nucleotide sequence ID" value="NC_005042.1"/>
</dbReference>
<dbReference type="RefSeq" id="WP_011124896.1">
    <property type="nucleotide sequence ID" value="NC_005042.1"/>
</dbReference>
<dbReference type="SMR" id="Q7VCJ6"/>
<dbReference type="STRING" id="167539.Pro_0744"/>
<dbReference type="EnsemblBacteria" id="AAP99788">
    <property type="protein sequence ID" value="AAP99788"/>
    <property type="gene ID" value="Pro_0744"/>
</dbReference>
<dbReference type="KEGG" id="pma:Pro_0744"/>
<dbReference type="PATRIC" id="fig|167539.5.peg.787"/>
<dbReference type="eggNOG" id="COG0547">
    <property type="taxonomic scope" value="Bacteria"/>
</dbReference>
<dbReference type="HOGENOM" id="CLU_034315_2_1_3"/>
<dbReference type="OrthoDB" id="9806430at2"/>
<dbReference type="UniPathway" id="UPA00035">
    <property type="reaction ID" value="UER00041"/>
</dbReference>
<dbReference type="Proteomes" id="UP000001420">
    <property type="component" value="Chromosome"/>
</dbReference>
<dbReference type="GO" id="GO:0005829">
    <property type="term" value="C:cytosol"/>
    <property type="evidence" value="ECO:0007669"/>
    <property type="project" value="TreeGrafter"/>
</dbReference>
<dbReference type="GO" id="GO:0004048">
    <property type="term" value="F:anthranilate phosphoribosyltransferase activity"/>
    <property type="evidence" value="ECO:0007669"/>
    <property type="project" value="UniProtKB-UniRule"/>
</dbReference>
<dbReference type="GO" id="GO:0000287">
    <property type="term" value="F:magnesium ion binding"/>
    <property type="evidence" value="ECO:0007669"/>
    <property type="project" value="UniProtKB-UniRule"/>
</dbReference>
<dbReference type="GO" id="GO:0000162">
    <property type="term" value="P:L-tryptophan biosynthetic process"/>
    <property type="evidence" value="ECO:0007669"/>
    <property type="project" value="UniProtKB-UniRule"/>
</dbReference>
<dbReference type="FunFam" id="3.40.1030.10:FF:000002">
    <property type="entry name" value="Anthranilate phosphoribosyltransferase"/>
    <property type="match status" value="1"/>
</dbReference>
<dbReference type="Gene3D" id="3.40.1030.10">
    <property type="entry name" value="Nucleoside phosphorylase/phosphoribosyltransferase catalytic domain"/>
    <property type="match status" value="1"/>
</dbReference>
<dbReference type="Gene3D" id="1.20.970.10">
    <property type="entry name" value="Transferase, Pyrimidine Nucleoside Phosphorylase, Chain C"/>
    <property type="match status" value="1"/>
</dbReference>
<dbReference type="HAMAP" id="MF_00211">
    <property type="entry name" value="TrpD"/>
    <property type="match status" value="1"/>
</dbReference>
<dbReference type="InterPro" id="IPR005940">
    <property type="entry name" value="Anthranilate_Pribosyl_Tfrase"/>
</dbReference>
<dbReference type="InterPro" id="IPR000312">
    <property type="entry name" value="Glycosyl_Trfase_fam3"/>
</dbReference>
<dbReference type="InterPro" id="IPR017459">
    <property type="entry name" value="Glycosyl_Trfase_fam3_N_dom"/>
</dbReference>
<dbReference type="InterPro" id="IPR036320">
    <property type="entry name" value="Glycosyl_Trfase_fam3_N_dom_sf"/>
</dbReference>
<dbReference type="InterPro" id="IPR035902">
    <property type="entry name" value="Nuc_phospho_transferase"/>
</dbReference>
<dbReference type="NCBIfam" id="TIGR01245">
    <property type="entry name" value="trpD"/>
    <property type="match status" value="1"/>
</dbReference>
<dbReference type="PANTHER" id="PTHR43285">
    <property type="entry name" value="ANTHRANILATE PHOSPHORIBOSYLTRANSFERASE"/>
    <property type="match status" value="1"/>
</dbReference>
<dbReference type="PANTHER" id="PTHR43285:SF2">
    <property type="entry name" value="ANTHRANILATE PHOSPHORIBOSYLTRANSFERASE"/>
    <property type="match status" value="1"/>
</dbReference>
<dbReference type="Pfam" id="PF02885">
    <property type="entry name" value="Glycos_trans_3N"/>
    <property type="match status" value="1"/>
</dbReference>
<dbReference type="Pfam" id="PF00591">
    <property type="entry name" value="Glycos_transf_3"/>
    <property type="match status" value="1"/>
</dbReference>
<dbReference type="SUPFAM" id="SSF52418">
    <property type="entry name" value="Nucleoside phosphorylase/phosphoribosyltransferase catalytic domain"/>
    <property type="match status" value="1"/>
</dbReference>
<dbReference type="SUPFAM" id="SSF47648">
    <property type="entry name" value="Nucleoside phosphorylase/phosphoribosyltransferase N-terminal domain"/>
    <property type="match status" value="1"/>
</dbReference>
<sequence length="341" mass="36518">MPIVSWPELLEKLLSTKEISEIEAKALMKAWLNDELLPVQTGAFLTALRAKQISGLELSSMAEVLRDACLFPYPLPEVFMVDTCGTGGDGADTFNISTAVAFVTASCGVTIAKHGNRSASGKVGSADVLEGLGIKLNAPLELVVKAIEKNNITFLFAPAWHSSLINLAPLRKALGVRTVFNLLGPLVNPFRPKAQVLGVAKSELLDPMVEALRNLGLERAVVVHGAGGLDEASLEGPNEVRFLENGQITSKTLDVEELGLTISPNSTLKGGSLATNQDILRSLFQGRGTQSQREVVALNSSLVFWASGKELDLKKGVTIALEAMELSKPLDKFNELKCCLE</sequence>
<evidence type="ECO:0000255" key="1">
    <source>
        <dbReference type="HAMAP-Rule" id="MF_00211"/>
    </source>
</evidence>
<feature type="chain" id="PRO_0000227178" description="Anthranilate phosphoribosyltransferase">
    <location>
        <begin position="1"/>
        <end position="341"/>
    </location>
</feature>
<feature type="binding site" evidence="1">
    <location>
        <position position="85"/>
    </location>
    <ligand>
        <name>5-phospho-alpha-D-ribose 1-diphosphate</name>
        <dbReference type="ChEBI" id="CHEBI:58017"/>
    </ligand>
</feature>
<feature type="binding site" evidence="1">
    <location>
        <position position="85"/>
    </location>
    <ligand>
        <name>anthranilate</name>
        <dbReference type="ChEBI" id="CHEBI:16567"/>
        <label>1</label>
    </ligand>
</feature>
<feature type="binding site" evidence="1">
    <location>
        <begin position="88"/>
        <end position="89"/>
    </location>
    <ligand>
        <name>5-phospho-alpha-D-ribose 1-diphosphate</name>
        <dbReference type="ChEBI" id="CHEBI:58017"/>
    </ligand>
</feature>
<feature type="binding site" evidence="1">
    <location>
        <position position="93"/>
    </location>
    <ligand>
        <name>5-phospho-alpha-D-ribose 1-diphosphate</name>
        <dbReference type="ChEBI" id="CHEBI:58017"/>
    </ligand>
</feature>
<feature type="binding site" evidence="1">
    <location>
        <begin position="95"/>
        <end position="98"/>
    </location>
    <ligand>
        <name>5-phospho-alpha-D-ribose 1-diphosphate</name>
        <dbReference type="ChEBI" id="CHEBI:58017"/>
    </ligand>
</feature>
<feature type="binding site" evidence="1">
    <location>
        <position position="97"/>
    </location>
    <ligand>
        <name>Mg(2+)</name>
        <dbReference type="ChEBI" id="CHEBI:18420"/>
        <label>1</label>
    </ligand>
</feature>
<feature type="binding site" evidence="1">
    <location>
        <begin position="113"/>
        <end position="121"/>
    </location>
    <ligand>
        <name>5-phospho-alpha-D-ribose 1-diphosphate</name>
        <dbReference type="ChEBI" id="CHEBI:58017"/>
    </ligand>
</feature>
<feature type="binding site" evidence="1">
    <location>
        <position position="116"/>
    </location>
    <ligand>
        <name>anthranilate</name>
        <dbReference type="ChEBI" id="CHEBI:16567"/>
        <label>1</label>
    </ligand>
</feature>
<feature type="binding site" evidence="1">
    <location>
        <position position="125"/>
    </location>
    <ligand>
        <name>5-phospho-alpha-D-ribose 1-diphosphate</name>
        <dbReference type="ChEBI" id="CHEBI:58017"/>
    </ligand>
</feature>
<feature type="binding site" evidence="1">
    <location>
        <position position="171"/>
    </location>
    <ligand>
        <name>anthranilate</name>
        <dbReference type="ChEBI" id="CHEBI:16567"/>
        <label>2</label>
    </ligand>
</feature>
<feature type="binding site" evidence="1">
    <location>
        <position position="230"/>
    </location>
    <ligand>
        <name>Mg(2+)</name>
        <dbReference type="ChEBI" id="CHEBI:18420"/>
        <label>2</label>
    </ligand>
</feature>
<feature type="binding site" evidence="1">
    <location>
        <position position="231"/>
    </location>
    <ligand>
        <name>Mg(2+)</name>
        <dbReference type="ChEBI" id="CHEBI:18420"/>
        <label>1</label>
    </ligand>
</feature>
<feature type="binding site" evidence="1">
    <location>
        <position position="231"/>
    </location>
    <ligand>
        <name>Mg(2+)</name>
        <dbReference type="ChEBI" id="CHEBI:18420"/>
        <label>2</label>
    </ligand>
</feature>
<reference key="1">
    <citation type="journal article" date="2003" name="Proc. Natl. Acad. Sci. U.S.A.">
        <title>Genome sequence of the cyanobacterium Prochlorococcus marinus SS120, a nearly minimal oxyphototrophic genome.</title>
        <authorList>
            <person name="Dufresne A."/>
            <person name="Salanoubat M."/>
            <person name="Partensky F."/>
            <person name="Artiguenave F."/>
            <person name="Axmann I.M."/>
            <person name="Barbe V."/>
            <person name="Duprat S."/>
            <person name="Galperin M.Y."/>
            <person name="Koonin E.V."/>
            <person name="Le Gall F."/>
            <person name="Makarova K.S."/>
            <person name="Ostrowski M."/>
            <person name="Oztas S."/>
            <person name="Robert C."/>
            <person name="Rogozin I.B."/>
            <person name="Scanlan D.J."/>
            <person name="Tandeau de Marsac N."/>
            <person name="Weissenbach J."/>
            <person name="Wincker P."/>
            <person name="Wolf Y.I."/>
            <person name="Hess W.R."/>
        </authorList>
    </citation>
    <scope>NUCLEOTIDE SEQUENCE [LARGE SCALE GENOMIC DNA]</scope>
    <source>
        <strain>SARG / CCMP1375 / SS120</strain>
    </source>
</reference>
<proteinExistence type="inferred from homology"/>
<organism>
    <name type="scientific">Prochlorococcus marinus (strain SARG / CCMP1375 / SS120)</name>
    <dbReference type="NCBI Taxonomy" id="167539"/>
    <lineage>
        <taxon>Bacteria</taxon>
        <taxon>Bacillati</taxon>
        <taxon>Cyanobacteriota</taxon>
        <taxon>Cyanophyceae</taxon>
        <taxon>Synechococcales</taxon>
        <taxon>Prochlorococcaceae</taxon>
        <taxon>Prochlorococcus</taxon>
    </lineage>
</organism>
<accession>Q7VCJ6</accession>
<keyword id="KW-0028">Amino-acid biosynthesis</keyword>
<keyword id="KW-0057">Aromatic amino acid biosynthesis</keyword>
<keyword id="KW-0328">Glycosyltransferase</keyword>
<keyword id="KW-0460">Magnesium</keyword>
<keyword id="KW-0479">Metal-binding</keyword>
<keyword id="KW-1185">Reference proteome</keyword>
<keyword id="KW-0808">Transferase</keyword>
<keyword id="KW-0822">Tryptophan biosynthesis</keyword>
<gene>
    <name evidence="1" type="primary">trpD</name>
    <name type="ordered locus">Pro_0744</name>
</gene>
<comment type="function">
    <text evidence="1">Catalyzes the transfer of the phosphoribosyl group of 5-phosphorylribose-1-pyrophosphate (PRPP) to anthranilate to yield N-(5'-phosphoribosyl)-anthranilate (PRA).</text>
</comment>
<comment type="catalytic activity">
    <reaction evidence="1">
        <text>N-(5-phospho-beta-D-ribosyl)anthranilate + diphosphate = 5-phospho-alpha-D-ribose 1-diphosphate + anthranilate</text>
        <dbReference type="Rhea" id="RHEA:11768"/>
        <dbReference type="ChEBI" id="CHEBI:16567"/>
        <dbReference type="ChEBI" id="CHEBI:18277"/>
        <dbReference type="ChEBI" id="CHEBI:33019"/>
        <dbReference type="ChEBI" id="CHEBI:58017"/>
        <dbReference type="EC" id="2.4.2.18"/>
    </reaction>
</comment>
<comment type="cofactor">
    <cofactor evidence="1">
        <name>Mg(2+)</name>
        <dbReference type="ChEBI" id="CHEBI:18420"/>
    </cofactor>
    <text evidence="1">Binds 2 magnesium ions per monomer.</text>
</comment>
<comment type="pathway">
    <text evidence="1">Amino-acid biosynthesis; L-tryptophan biosynthesis; L-tryptophan from chorismate: step 2/5.</text>
</comment>
<comment type="subunit">
    <text evidence="1">Homodimer.</text>
</comment>
<comment type="similarity">
    <text evidence="1">Belongs to the anthranilate phosphoribosyltransferase family.</text>
</comment>